<accession>Q57JQ4</accession>
<gene>
    <name evidence="1" type="primary">uppP</name>
    <name type="synonym">bacA</name>
    <name type="ordered locus">SCH_3152</name>
</gene>
<evidence type="ECO:0000255" key="1">
    <source>
        <dbReference type="HAMAP-Rule" id="MF_01006"/>
    </source>
</evidence>
<evidence type="ECO:0000305" key="2"/>
<protein>
    <recommendedName>
        <fullName evidence="1">Undecaprenyl-diphosphatase</fullName>
        <ecNumber evidence="1">3.6.1.27</ecNumber>
    </recommendedName>
    <alternativeName>
        <fullName evidence="1">Bacitracin resistance protein</fullName>
    </alternativeName>
    <alternativeName>
        <fullName evidence="1">Undecaprenyl pyrophosphate phosphatase</fullName>
    </alternativeName>
</protein>
<comment type="function">
    <text evidence="1">Catalyzes the dephosphorylation of undecaprenyl diphosphate (UPP). Confers resistance to bacitracin.</text>
</comment>
<comment type="catalytic activity">
    <reaction evidence="1">
        <text>di-trans,octa-cis-undecaprenyl diphosphate + H2O = di-trans,octa-cis-undecaprenyl phosphate + phosphate + H(+)</text>
        <dbReference type="Rhea" id="RHEA:28094"/>
        <dbReference type="ChEBI" id="CHEBI:15377"/>
        <dbReference type="ChEBI" id="CHEBI:15378"/>
        <dbReference type="ChEBI" id="CHEBI:43474"/>
        <dbReference type="ChEBI" id="CHEBI:58405"/>
        <dbReference type="ChEBI" id="CHEBI:60392"/>
        <dbReference type="EC" id="3.6.1.27"/>
    </reaction>
</comment>
<comment type="subcellular location">
    <subcellularLocation>
        <location evidence="1">Cell inner membrane</location>
        <topology evidence="1">Multi-pass membrane protein</topology>
    </subcellularLocation>
</comment>
<comment type="miscellaneous">
    <text>Bacitracin is thought to be involved in the inhibition of peptidoglycan synthesis by sequestering undecaprenyl diphosphate, thereby reducing the pool of lipid carrier available.</text>
</comment>
<comment type="similarity">
    <text evidence="1">Belongs to the UppP family.</text>
</comment>
<comment type="sequence caution" evidence="2">
    <conflict type="erroneous initiation">
        <sequence resource="EMBL-CDS" id="AAX67058"/>
    </conflict>
</comment>
<organism>
    <name type="scientific">Salmonella choleraesuis (strain SC-B67)</name>
    <dbReference type="NCBI Taxonomy" id="321314"/>
    <lineage>
        <taxon>Bacteria</taxon>
        <taxon>Pseudomonadati</taxon>
        <taxon>Pseudomonadota</taxon>
        <taxon>Gammaproteobacteria</taxon>
        <taxon>Enterobacterales</taxon>
        <taxon>Enterobacteriaceae</taxon>
        <taxon>Salmonella</taxon>
    </lineage>
</organism>
<dbReference type="EC" id="3.6.1.27" evidence="1"/>
<dbReference type="EMBL" id="AE017220">
    <property type="protein sequence ID" value="AAX67058.1"/>
    <property type="status" value="ALT_INIT"/>
    <property type="molecule type" value="Genomic_DNA"/>
</dbReference>
<dbReference type="RefSeq" id="WP_001281926.1">
    <property type="nucleotide sequence ID" value="NC_006905.1"/>
</dbReference>
<dbReference type="SMR" id="Q57JQ4"/>
<dbReference type="KEGG" id="sec:SCH_3152"/>
<dbReference type="HOGENOM" id="CLU_060296_2_0_6"/>
<dbReference type="Proteomes" id="UP000000538">
    <property type="component" value="Chromosome"/>
</dbReference>
<dbReference type="GO" id="GO:0005886">
    <property type="term" value="C:plasma membrane"/>
    <property type="evidence" value="ECO:0007669"/>
    <property type="project" value="UniProtKB-SubCell"/>
</dbReference>
<dbReference type="GO" id="GO:0050380">
    <property type="term" value="F:undecaprenyl-diphosphatase activity"/>
    <property type="evidence" value="ECO:0007669"/>
    <property type="project" value="UniProtKB-UniRule"/>
</dbReference>
<dbReference type="GO" id="GO:0071555">
    <property type="term" value="P:cell wall organization"/>
    <property type="evidence" value="ECO:0007669"/>
    <property type="project" value="UniProtKB-KW"/>
</dbReference>
<dbReference type="GO" id="GO:0009252">
    <property type="term" value="P:peptidoglycan biosynthetic process"/>
    <property type="evidence" value="ECO:0007669"/>
    <property type="project" value="UniProtKB-KW"/>
</dbReference>
<dbReference type="GO" id="GO:0008360">
    <property type="term" value="P:regulation of cell shape"/>
    <property type="evidence" value="ECO:0007669"/>
    <property type="project" value="UniProtKB-KW"/>
</dbReference>
<dbReference type="GO" id="GO:0046677">
    <property type="term" value="P:response to antibiotic"/>
    <property type="evidence" value="ECO:0007669"/>
    <property type="project" value="UniProtKB-UniRule"/>
</dbReference>
<dbReference type="HAMAP" id="MF_01006">
    <property type="entry name" value="Undec_diphosphatase"/>
    <property type="match status" value="1"/>
</dbReference>
<dbReference type="InterPro" id="IPR003824">
    <property type="entry name" value="UppP"/>
</dbReference>
<dbReference type="NCBIfam" id="NF001388">
    <property type="entry name" value="PRK00281.1-1"/>
    <property type="match status" value="1"/>
</dbReference>
<dbReference type="NCBIfam" id="NF001389">
    <property type="entry name" value="PRK00281.1-2"/>
    <property type="match status" value="1"/>
</dbReference>
<dbReference type="NCBIfam" id="NF001390">
    <property type="entry name" value="PRK00281.1-4"/>
    <property type="match status" value="1"/>
</dbReference>
<dbReference type="NCBIfam" id="TIGR00753">
    <property type="entry name" value="undec_PP_bacA"/>
    <property type="match status" value="1"/>
</dbReference>
<dbReference type="PANTHER" id="PTHR30622">
    <property type="entry name" value="UNDECAPRENYL-DIPHOSPHATASE"/>
    <property type="match status" value="1"/>
</dbReference>
<dbReference type="PANTHER" id="PTHR30622:SF3">
    <property type="entry name" value="UNDECAPRENYL-DIPHOSPHATASE"/>
    <property type="match status" value="1"/>
</dbReference>
<dbReference type="Pfam" id="PF02673">
    <property type="entry name" value="BacA"/>
    <property type="match status" value="1"/>
</dbReference>
<proteinExistence type="inferred from homology"/>
<feature type="chain" id="PRO_0000151190" description="Undecaprenyl-diphosphatase">
    <location>
        <begin position="1"/>
        <end position="273"/>
    </location>
</feature>
<feature type="transmembrane region" description="Helical" evidence="1">
    <location>
        <begin position="6"/>
        <end position="26"/>
    </location>
</feature>
<feature type="transmembrane region" description="Helical" evidence="1">
    <location>
        <begin position="54"/>
        <end position="74"/>
    </location>
</feature>
<feature type="transmembrane region" description="Helical" evidence="1">
    <location>
        <begin position="90"/>
        <end position="110"/>
    </location>
</feature>
<feature type="transmembrane region" description="Helical" evidence="1">
    <location>
        <begin position="116"/>
        <end position="136"/>
    </location>
</feature>
<feature type="transmembrane region" description="Helical" evidence="1">
    <location>
        <begin position="190"/>
        <end position="210"/>
    </location>
</feature>
<feature type="transmembrane region" description="Helical" evidence="1">
    <location>
        <begin position="222"/>
        <end position="242"/>
    </location>
</feature>
<feature type="transmembrane region" description="Helical" evidence="1">
    <location>
        <begin position="252"/>
        <end position="272"/>
    </location>
</feature>
<reference key="1">
    <citation type="journal article" date="2005" name="Nucleic Acids Res.">
        <title>The genome sequence of Salmonella enterica serovar Choleraesuis, a highly invasive and resistant zoonotic pathogen.</title>
        <authorList>
            <person name="Chiu C.-H."/>
            <person name="Tang P."/>
            <person name="Chu C."/>
            <person name="Hu S."/>
            <person name="Bao Q."/>
            <person name="Yu J."/>
            <person name="Chou Y.-Y."/>
            <person name="Wang H.-S."/>
            <person name="Lee Y.-S."/>
        </authorList>
    </citation>
    <scope>NUCLEOTIDE SEQUENCE [LARGE SCALE GENOMIC DNA]</scope>
    <source>
        <strain>SC-B67</strain>
    </source>
</reference>
<keyword id="KW-0046">Antibiotic resistance</keyword>
<keyword id="KW-0997">Cell inner membrane</keyword>
<keyword id="KW-1003">Cell membrane</keyword>
<keyword id="KW-0133">Cell shape</keyword>
<keyword id="KW-0961">Cell wall biogenesis/degradation</keyword>
<keyword id="KW-0378">Hydrolase</keyword>
<keyword id="KW-0472">Membrane</keyword>
<keyword id="KW-0573">Peptidoglycan synthesis</keyword>
<keyword id="KW-0812">Transmembrane</keyword>
<keyword id="KW-1133">Transmembrane helix</keyword>
<name>UPPP_SALCH</name>
<sequence>MSDMHSLLIAAILGVVEGLTEFLPVSSTGHMIIVGHLLGFEGDTAKTFEVVIQLGSILAVVVMFWRQLFGLIGIHFGRPLQREGESKGRLTLIHILLGMIPAVVLGLVFHDTIKSLFNPINVMYALVVGGLLLIAAECLKPKEPRAPGLDDMTYRQAFMIGCFQCLALWPGFSRSGATISGGMLMGVSRYAASEFSFLLAVPMMMGATVLDLYKSWSFLTAADIPMFAVGFVTAFVVALIAIKTFLQLIKRISFIPFAIYRFVVAAAVYVVFF</sequence>